<comment type="similarity">
    <text evidence="1">Belongs to the UPF0352 family.</text>
</comment>
<feature type="chain" id="PRO_0000201805" description="UPF0352 protein VV1166">
    <location>
        <begin position="1"/>
        <end position="75"/>
    </location>
</feature>
<gene>
    <name type="ordered locus">VV1166</name>
</gene>
<proteinExistence type="inferred from homology"/>
<organism>
    <name type="scientific">Vibrio vulnificus (strain YJ016)</name>
    <dbReference type="NCBI Taxonomy" id="196600"/>
    <lineage>
        <taxon>Bacteria</taxon>
        <taxon>Pseudomonadati</taxon>
        <taxon>Pseudomonadota</taxon>
        <taxon>Gammaproteobacteria</taxon>
        <taxon>Vibrionales</taxon>
        <taxon>Vibrionaceae</taxon>
        <taxon>Vibrio</taxon>
    </lineage>
</organism>
<name>Y1166_VIBVY</name>
<dbReference type="EMBL" id="BA000037">
    <property type="protein sequence ID" value="BAC93930.1"/>
    <property type="molecule type" value="Genomic_DNA"/>
</dbReference>
<dbReference type="RefSeq" id="WP_011149891.1">
    <property type="nucleotide sequence ID" value="NC_005139.1"/>
</dbReference>
<dbReference type="SMR" id="Q7MMA6"/>
<dbReference type="STRING" id="672.VV93_v1c10860"/>
<dbReference type="KEGG" id="vvy:VV1166"/>
<dbReference type="eggNOG" id="COG3082">
    <property type="taxonomic scope" value="Bacteria"/>
</dbReference>
<dbReference type="HOGENOM" id="CLU_175457_0_0_6"/>
<dbReference type="Proteomes" id="UP000002675">
    <property type="component" value="Chromosome I"/>
</dbReference>
<dbReference type="Gene3D" id="1.10.3390.10">
    <property type="entry name" value="YejL-like"/>
    <property type="match status" value="1"/>
</dbReference>
<dbReference type="HAMAP" id="MF_00816">
    <property type="entry name" value="UPF0352"/>
    <property type="match status" value="1"/>
</dbReference>
<dbReference type="InterPro" id="IPR009857">
    <property type="entry name" value="UPF0352"/>
</dbReference>
<dbReference type="InterPro" id="IPR023202">
    <property type="entry name" value="YejL_sf"/>
</dbReference>
<dbReference type="NCBIfam" id="NF010242">
    <property type="entry name" value="PRK13689.1"/>
    <property type="match status" value="1"/>
</dbReference>
<dbReference type="Pfam" id="PF07208">
    <property type="entry name" value="DUF1414"/>
    <property type="match status" value="1"/>
</dbReference>
<dbReference type="PIRSF" id="PIRSF006188">
    <property type="entry name" value="UCP006188"/>
    <property type="match status" value="1"/>
</dbReference>
<dbReference type="SUPFAM" id="SSF158651">
    <property type="entry name" value="YejL-like"/>
    <property type="match status" value="1"/>
</dbReference>
<evidence type="ECO:0000255" key="1">
    <source>
        <dbReference type="HAMAP-Rule" id="MF_00816"/>
    </source>
</evidence>
<protein>
    <recommendedName>
        <fullName evidence="1">UPF0352 protein VV1166</fullName>
    </recommendedName>
</protein>
<sequence>MPITSKYTDEQVESILTEIGAVLDKHGATPELSLMIAGNIATNVLNQQVAASQRKLIAEKFAQALISSLQEPKTH</sequence>
<accession>Q7MMA6</accession>
<reference key="1">
    <citation type="journal article" date="2003" name="Genome Res.">
        <title>Comparative genome analysis of Vibrio vulnificus, a marine pathogen.</title>
        <authorList>
            <person name="Chen C.-Y."/>
            <person name="Wu K.-M."/>
            <person name="Chang Y.-C."/>
            <person name="Chang C.-H."/>
            <person name="Tsai H.-C."/>
            <person name="Liao T.-L."/>
            <person name="Liu Y.-M."/>
            <person name="Chen H.-J."/>
            <person name="Shen A.B.-T."/>
            <person name="Li J.-C."/>
            <person name="Su T.-L."/>
            <person name="Shao C.-P."/>
            <person name="Lee C.-T."/>
            <person name="Hor L.-I."/>
            <person name="Tsai S.-F."/>
        </authorList>
    </citation>
    <scope>NUCLEOTIDE SEQUENCE [LARGE SCALE GENOMIC DNA]</scope>
    <source>
        <strain>YJ016</strain>
    </source>
</reference>